<evidence type="ECO:0000255" key="1">
    <source>
        <dbReference type="HAMAP-Rule" id="MF_00685"/>
    </source>
</evidence>
<proteinExistence type="inferred from homology"/>
<name>GLGB_ACTP2</name>
<keyword id="KW-0119">Carbohydrate metabolism</keyword>
<keyword id="KW-0320">Glycogen biosynthesis</keyword>
<keyword id="KW-0321">Glycogen metabolism</keyword>
<keyword id="KW-0328">Glycosyltransferase</keyword>
<keyword id="KW-1185">Reference proteome</keyword>
<keyword id="KW-0808">Transferase</keyword>
<accession>A3MZ64</accession>
<protein>
    <recommendedName>
        <fullName evidence="1">1,4-alpha-glucan branching enzyme GlgB</fullName>
        <ecNumber evidence="1">2.4.1.18</ecNumber>
    </recommendedName>
    <alternativeName>
        <fullName evidence="1">1,4-alpha-D-glucan:1,4-alpha-D-glucan 6-glucosyl-transferase</fullName>
    </alternativeName>
    <alternativeName>
        <fullName evidence="1">Alpha-(1-&gt;4)-glucan branching enzyme</fullName>
    </alternativeName>
    <alternativeName>
        <fullName evidence="1">Glycogen branching enzyme</fullName>
        <shortName evidence="1">BE</shortName>
    </alternativeName>
</protein>
<feature type="chain" id="PRO_1000131804" description="1,4-alpha-glucan branching enzyme GlgB">
    <location>
        <begin position="1"/>
        <end position="777"/>
    </location>
</feature>
<feature type="active site" description="Nucleophile" evidence="1">
    <location>
        <position position="408"/>
    </location>
</feature>
<feature type="active site" description="Proton donor" evidence="1">
    <location>
        <position position="461"/>
    </location>
</feature>
<comment type="function">
    <text evidence="1">Catalyzes the formation of the alpha-1,6-glucosidic linkages in glycogen by scission of a 1,4-alpha-linked oligosaccharide from growing alpha-1,4-glucan chains and the subsequent attachment of the oligosaccharide to the alpha-1,6 position.</text>
</comment>
<comment type="catalytic activity">
    <reaction evidence="1">
        <text>Transfers a segment of a (1-&gt;4)-alpha-D-glucan chain to a primary hydroxy group in a similar glucan chain.</text>
        <dbReference type="EC" id="2.4.1.18"/>
    </reaction>
</comment>
<comment type="pathway">
    <text evidence="1">Glycan biosynthesis; glycogen biosynthesis.</text>
</comment>
<comment type="subunit">
    <text evidence="1">Monomer.</text>
</comment>
<comment type="similarity">
    <text evidence="1">Belongs to the glycosyl hydrolase 13 family. GlgB subfamily.</text>
</comment>
<reference key="1">
    <citation type="journal article" date="2008" name="J. Bacteriol.">
        <title>The complete genome sequence of Actinobacillus pleuropneumoniae L20 (serotype 5b).</title>
        <authorList>
            <person name="Foote S.J."/>
            <person name="Bosse J.T."/>
            <person name="Bouevitch A.B."/>
            <person name="Langford P.R."/>
            <person name="Young N.M."/>
            <person name="Nash J.H.E."/>
        </authorList>
    </citation>
    <scope>NUCLEOTIDE SEQUENCE [LARGE SCALE GENOMIC DNA]</scope>
    <source>
        <strain>L20</strain>
    </source>
</reference>
<organism>
    <name type="scientific">Actinobacillus pleuropneumoniae serotype 5b (strain L20)</name>
    <dbReference type="NCBI Taxonomy" id="416269"/>
    <lineage>
        <taxon>Bacteria</taxon>
        <taxon>Pseudomonadati</taxon>
        <taxon>Pseudomonadota</taxon>
        <taxon>Gammaproteobacteria</taxon>
        <taxon>Pasteurellales</taxon>
        <taxon>Pasteurellaceae</taxon>
        <taxon>Actinobacillus</taxon>
    </lineage>
</organism>
<gene>
    <name evidence="1" type="primary">glgB</name>
    <name type="ordered locus">APL_0346</name>
</gene>
<dbReference type="EC" id="2.4.1.18" evidence="1"/>
<dbReference type="EMBL" id="CP000569">
    <property type="protein sequence ID" value="ABN73450.1"/>
    <property type="molecule type" value="Genomic_DNA"/>
</dbReference>
<dbReference type="RefSeq" id="WP_009874649.1">
    <property type="nucleotide sequence ID" value="NC_009053.1"/>
</dbReference>
<dbReference type="SMR" id="A3MZ64"/>
<dbReference type="STRING" id="416269.APL_0346"/>
<dbReference type="CAZy" id="CBM48">
    <property type="family name" value="Carbohydrate-Binding Module Family 48"/>
</dbReference>
<dbReference type="CAZy" id="GH13">
    <property type="family name" value="Glycoside Hydrolase Family 13"/>
</dbReference>
<dbReference type="EnsemblBacteria" id="ABN73450">
    <property type="protein sequence ID" value="ABN73450"/>
    <property type="gene ID" value="APL_0346"/>
</dbReference>
<dbReference type="KEGG" id="apl:APL_0346"/>
<dbReference type="PATRIC" id="fig|416269.6.peg.355"/>
<dbReference type="eggNOG" id="COG0296">
    <property type="taxonomic scope" value="Bacteria"/>
</dbReference>
<dbReference type="HOGENOM" id="CLU_004245_3_2_6"/>
<dbReference type="UniPathway" id="UPA00164"/>
<dbReference type="Proteomes" id="UP000001432">
    <property type="component" value="Chromosome"/>
</dbReference>
<dbReference type="GO" id="GO:0005829">
    <property type="term" value="C:cytosol"/>
    <property type="evidence" value="ECO:0007669"/>
    <property type="project" value="TreeGrafter"/>
</dbReference>
<dbReference type="GO" id="GO:0003844">
    <property type="term" value="F:1,4-alpha-glucan branching enzyme activity"/>
    <property type="evidence" value="ECO:0007669"/>
    <property type="project" value="UniProtKB-UniRule"/>
</dbReference>
<dbReference type="GO" id="GO:0043169">
    <property type="term" value="F:cation binding"/>
    <property type="evidence" value="ECO:0007669"/>
    <property type="project" value="InterPro"/>
</dbReference>
<dbReference type="GO" id="GO:0004553">
    <property type="term" value="F:hydrolase activity, hydrolyzing O-glycosyl compounds"/>
    <property type="evidence" value="ECO:0007669"/>
    <property type="project" value="InterPro"/>
</dbReference>
<dbReference type="GO" id="GO:0005978">
    <property type="term" value="P:glycogen biosynthetic process"/>
    <property type="evidence" value="ECO:0007669"/>
    <property type="project" value="UniProtKB-UniRule"/>
</dbReference>
<dbReference type="CDD" id="cd11322">
    <property type="entry name" value="AmyAc_Glg_BE"/>
    <property type="match status" value="1"/>
</dbReference>
<dbReference type="CDD" id="cd02855">
    <property type="entry name" value="E_set_GBE_prok_N"/>
    <property type="match status" value="1"/>
</dbReference>
<dbReference type="FunFam" id="2.60.40.10:FF:000169">
    <property type="entry name" value="1,4-alpha-glucan branching enzyme GlgB"/>
    <property type="match status" value="1"/>
</dbReference>
<dbReference type="FunFam" id="2.60.40.1180:FF:000002">
    <property type="entry name" value="1,4-alpha-glucan branching enzyme GlgB"/>
    <property type="match status" value="1"/>
</dbReference>
<dbReference type="FunFam" id="3.20.20.80:FF:000003">
    <property type="entry name" value="1,4-alpha-glucan branching enzyme GlgB"/>
    <property type="match status" value="1"/>
</dbReference>
<dbReference type="Gene3D" id="3.20.20.80">
    <property type="entry name" value="Glycosidases"/>
    <property type="match status" value="1"/>
</dbReference>
<dbReference type="Gene3D" id="2.60.40.1180">
    <property type="entry name" value="Golgi alpha-mannosidase II"/>
    <property type="match status" value="1"/>
</dbReference>
<dbReference type="Gene3D" id="2.60.40.10">
    <property type="entry name" value="Immunoglobulins"/>
    <property type="match status" value="1"/>
</dbReference>
<dbReference type="HAMAP" id="MF_00685">
    <property type="entry name" value="GlgB"/>
    <property type="match status" value="1"/>
</dbReference>
<dbReference type="InterPro" id="IPR006048">
    <property type="entry name" value="A-amylase/branching_C"/>
</dbReference>
<dbReference type="InterPro" id="IPR037439">
    <property type="entry name" value="Branching_enzy"/>
</dbReference>
<dbReference type="InterPro" id="IPR006407">
    <property type="entry name" value="GlgB"/>
</dbReference>
<dbReference type="InterPro" id="IPR054169">
    <property type="entry name" value="GlgB_N"/>
</dbReference>
<dbReference type="InterPro" id="IPR044143">
    <property type="entry name" value="GlgB_N_E_set_prok"/>
</dbReference>
<dbReference type="InterPro" id="IPR006047">
    <property type="entry name" value="Glyco_hydro_13_cat_dom"/>
</dbReference>
<dbReference type="InterPro" id="IPR004193">
    <property type="entry name" value="Glyco_hydro_13_N"/>
</dbReference>
<dbReference type="InterPro" id="IPR013780">
    <property type="entry name" value="Glyco_hydro_b"/>
</dbReference>
<dbReference type="InterPro" id="IPR017853">
    <property type="entry name" value="Glycoside_hydrolase_SF"/>
</dbReference>
<dbReference type="InterPro" id="IPR013783">
    <property type="entry name" value="Ig-like_fold"/>
</dbReference>
<dbReference type="InterPro" id="IPR014756">
    <property type="entry name" value="Ig_E-set"/>
</dbReference>
<dbReference type="NCBIfam" id="TIGR01515">
    <property type="entry name" value="branching_enzym"/>
    <property type="match status" value="1"/>
</dbReference>
<dbReference type="NCBIfam" id="NF003811">
    <property type="entry name" value="PRK05402.1"/>
    <property type="match status" value="1"/>
</dbReference>
<dbReference type="NCBIfam" id="NF008967">
    <property type="entry name" value="PRK12313.1"/>
    <property type="match status" value="1"/>
</dbReference>
<dbReference type="PANTHER" id="PTHR43651">
    <property type="entry name" value="1,4-ALPHA-GLUCAN-BRANCHING ENZYME"/>
    <property type="match status" value="1"/>
</dbReference>
<dbReference type="PANTHER" id="PTHR43651:SF3">
    <property type="entry name" value="1,4-ALPHA-GLUCAN-BRANCHING ENZYME"/>
    <property type="match status" value="1"/>
</dbReference>
<dbReference type="Pfam" id="PF00128">
    <property type="entry name" value="Alpha-amylase"/>
    <property type="match status" value="1"/>
</dbReference>
<dbReference type="Pfam" id="PF02806">
    <property type="entry name" value="Alpha-amylase_C"/>
    <property type="match status" value="1"/>
</dbReference>
<dbReference type="Pfam" id="PF02922">
    <property type="entry name" value="CBM_48"/>
    <property type="match status" value="1"/>
</dbReference>
<dbReference type="Pfam" id="PF22019">
    <property type="entry name" value="GlgB_N"/>
    <property type="match status" value="1"/>
</dbReference>
<dbReference type="PIRSF" id="PIRSF000463">
    <property type="entry name" value="GlgB"/>
    <property type="match status" value="1"/>
</dbReference>
<dbReference type="SMART" id="SM00642">
    <property type="entry name" value="Aamy"/>
    <property type="match status" value="1"/>
</dbReference>
<dbReference type="SUPFAM" id="SSF51445">
    <property type="entry name" value="(Trans)glycosidases"/>
    <property type="match status" value="1"/>
</dbReference>
<dbReference type="SUPFAM" id="SSF81296">
    <property type="entry name" value="E set domains"/>
    <property type="match status" value="2"/>
</dbReference>
<dbReference type="SUPFAM" id="SSF51011">
    <property type="entry name" value="Glycosyl hydrolase domain"/>
    <property type="match status" value="1"/>
</dbReference>
<sequence>MKTYTYSKQDLSFIEQLSQAYCKDPFSYLGLHQAGDVSVIRVFLPEATTVKILSAVGQILSEALKIDDSGLFVAQLAQQYSSLNYRLRVGYSLAEIDLEDPYRFTSSLLPMDNWLLAEGTHLRPYEILGAHLKTQEGVSGVHFSVWAPNARRVSVVGDFNYWDGRVNPMRFHAESGIWDIFLPNVEKGALYKFEILDSNGNIRLKSDPYAFASQFRPDTASVVTGLPEKIEVDAKLRHANDPDQPISIYEVHLGSWRRHLENNYWLNYEEIANELIPYVKDMGFTHIELLPITEYPFDGSWGYQPTGLYSPTSRFGSPEDLRTLIRKAHEAGINVILDWVVGHFPTDSHGLTEFDGSHLYEHQDPREGYHQDWNTLIFNYGRHEVFNYLSSNALYWTERFGIDGLRVDAVSSMIYRDYSRKDGEWIPNQYGGRENLEALDFLRRTNRMLKKEGHGAVVIAEESTSFAGITHSPEENGVGFDYKWNMGWMNDTLRYMSLDPIYRQYHHDWMTFGMMYQYSEKFVLPLSHDEVVHGKCSILGKMSGDCWQKFANLRAYYGYMWGYPGKKLLFMGNEFAQGREWNYNESLDWFLLGEQGGGWHKGVLNWVRDLNRTYQKYPALYQLDYDPAGFEWLVVDDWQQSVFAFERKAKNGESVIVVSNFTPVVRHNYRIGVRQDGTYTEILNSDAAYYEGSNVGNYGEIECEAIESHGKPFSIELSIPPLSTIFIACQPKPKEAVEAEQDIVKMAEVAMQKALKPTKKTVSVKAKAHKKAHKNKK</sequence>